<comment type="subcellular location">
    <subcellularLocation>
        <location evidence="2">Membrane</location>
        <topology evidence="2">Single-pass membrane protein</topology>
    </subcellularLocation>
</comment>
<gene>
    <name type="ordered locus">MG286</name>
</gene>
<name>Y286_MYCGE</name>
<evidence type="ECO:0000255" key="1"/>
<evidence type="ECO:0000305" key="2"/>
<dbReference type="EMBL" id="L43967">
    <property type="protein sequence ID" value="AAC71508.1"/>
    <property type="molecule type" value="Genomic_DNA"/>
</dbReference>
<dbReference type="PIR" id="F64231">
    <property type="entry name" value="F64231"/>
</dbReference>
<dbReference type="RefSeq" id="WP_010869408.1">
    <property type="nucleotide sequence ID" value="NC_000908.2"/>
</dbReference>
<dbReference type="SMR" id="P47528"/>
<dbReference type="STRING" id="243273.MG_286"/>
<dbReference type="GeneID" id="88282447"/>
<dbReference type="KEGG" id="mge:MG_286"/>
<dbReference type="eggNOG" id="ENOG5030N2U">
    <property type="taxonomic scope" value="Bacteria"/>
</dbReference>
<dbReference type="HOGENOM" id="CLU_1388879_0_0_14"/>
<dbReference type="InParanoid" id="P47528"/>
<dbReference type="OrthoDB" id="9925077at2"/>
<dbReference type="BioCyc" id="MGEN243273:G1GJ2-349-MONOMER"/>
<dbReference type="Proteomes" id="UP000000807">
    <property type="component" value="Chromosome"/>
</dbReference>
<dbReference type="GO" id="GO:0016020">
    <property type="term" value="C:membrane"/>
    <property type="evidence" value="ECO:0007669"/>
    <property type="project" value="UniProtKB-SubCell"/>
</dbReference>
<dbReference type="InterPro" id="IPR035219">
    <property type="entry name" value="DUF5452"/>
</dbReference>
<dbReference type="Pfam" id="PF17533">
    <property type="entry name" value="DUF5452"/>
    <property type="match status" value="1"/>
</dbReference>
<proteinExistence type="predicted"/>
<protein>
    <recommendedName>
        <fullName>Uncharacterized protein MG286</fullName>
    </recommendedName>
</protein>
<feature type="chain" id="PRO_0000210514" description="Uncharacterized protein MG286">
    <location>
        <begin position="1"/>
        <end position="196"/>
    </location>
</feature>
<feature type="transmembrane region" description="Helical" evidence="1">
    <location>
        <begin position="11"/>
        <end position="31"/>
    </location>
</feature>
<reference key="1">
    <citation type="journal article" date="1995" name="Science">
        <title>The minimal gene complement of Mycoplasma genitalium.</title>
        <authorList>
            <person name="Fraser C.M."/>
            <person name="Gocayne J.D."/>
            <person name="White O."/>
            <person name="Adams M.D."/>
            <person name="Clayton R.A."/>
            <person name="Fleischmann R.D."/>
            <person name="Bult C.J."/>
            <person name="Kerlavage A.R."/>
            <person name="Sutton G.G."/>
            <person name="Kelley J.M."/>
            <person name="Fritchman J.L."/>
            <person name="Weidman J.F."/>
            <person name="Small K.V."/>
            <person name="Sandusky M."/>
            <person name="Fuhrmann J.L."/>
            <person name="Nguyen D.T."/>
            <person name="Utterback T.R."/>
            <person name="Saudek D.M."/>
            <person name="Phillips C.A."/>
            <person name="Merrick J.M."/>
            <person name="Tomb J.-F."/>
            <person name="Dougherty B.A."/>
            <person name="Bott K.F."/>
            <person name="Hu P.-C."/>
            <person name="Lucier T.S."/>
            <person name="Peterson S.N."/>
            <person name="Smith H.O."/>
            <person name="Hutchison C.A. III"/>
            <person name="Venter J.C."/>
        </authorList>
    </citation>
    <scope>NUCLEOTIDE SEQUENCE [LARGE SCALE GENOMIC DNA]</scope>
    <source>
        <strain>ATCC 33530 / DSM 19775 / NCTC 10195 / G37</strain>
    </source>
</reference>
<accession>P47528</accession>
<sequence length="196" mass="23300">MIFSISKRKLICGFLLVILTIGGVLGGVYLVTKNNKDNYQNESNFNNQEQISKIPNFKAIGPETQRILRERNYPLDDSGYYVYKYGEINRYLRNESELDELINYRVMVPSLKLHHKRVNFDKAFLESKLRKWIIKAIKQHNYFQHFENEPNLRVQYNMNIPAQKIDVNAVWSYKKDNDAATGKPIRYWDQFELKLK</sequence>
<organism>
    <name type="scientific">Mycoplasma genitalium (strain ATCC 33530 / DSM 19775 / NCTC 10195 / G37)</name>
    <name type="common">Mycoplasmoides genitalium</name>
    <dbReference type="NCBI Taxonomy" id="243273"/>
    <lineage>
        <taxon>Bacteria</taxon>
        <taxon>Bacillati</taxon>
        <taxon>Mycoplasmatota</taxon>
        <taxon>Mycoplasmoidales</taxon>
        <taxon>Mycoplasmoidaceae</taxon>
        <taxon>Mycoplasmoides</taxon>
    </lineage>
</organism>
<keyword id="KW-0472">Membrane</keyword>
<keyword id="KW-1185">Reference proteome</keyword>
<keyword id="KW-0812">Transmembrane</keyword>
<keyword id="KW-1133">Transmembrane helix</keyword>